<comment type="subcellular location">
    <subcellularLocation>
        <location evidence="2">Cell membrane</location>
        <topology evidence="2">Multi-pass membrane protein</topology>
    </subcellularLocation>
</comment>
<comment type="similarity">
    <text evidence="2">Belongs to the UPF0324 family.</text>
</comment>
<dbReference type="EMBL" id="AL646052">
    <property type="protein sequence ID" value="CAD14813.1"/>
    <property type="molecule type" value="Genomic_DNA"/>
</dbReference>
<dbReference type="RefSeq" id="WP_011001061.1">
    <property type="nucleotide sequence ID" value="NC_003295.1"/>
</dbReference>
<dbReference type="STRING" id="267608.RSc1111"/>
<dbReference type="EnsemblBacteria" id="CAD14813">
    <property type="protein sequence ID" value="CAD14813"/>
    <property type="gene ID" value="RSc1111"/>
</dbReference>
<dbReference type="KEGG" id="rso:RSc1111"/>
<dbReference type="PATRIC" id="fig|267608.8.peg.1128"/>
<dbReference type="eggNOG" id="COG2855">
    <property type="taxonomic scope" value="Bacteria"/>
</dbReference>
<dbReference type="HOGENOM" id="CLU_033541_0_0_4"/>
<dbReference type="Proteomes" id="UP000001436">
    <property type="component" value="Chromosome"/>
</dbReference>
<dbReference type="GO" id="GO:0005886">
    <property type="term" value="C:plasma membrane"/>
    <property type="evidence" value="ECO:0007669"/>
    <property type="project" value="UniProtKB-SubCell"/>
</dbReference>
<dbReference type="InterPro" id="IPR018383">
    <property type="entry name" value="UPF0324_pro"/>
</dbReference>
<dbReference type="InterPro" id="IPR004630">
    <property type="entry name" value="UPF0324_YeiH-like"/>
</dbReference>
<dbReference type="NCBIfam" id="TIGR00698">
    <property type="entry name" value="YeiH family putative sulfate export transporter"/>
    <property type="match status" value="1"/>
</dbReference>
<dbReference type="PANTHER" id="PTHR30106">
    <property type="entry name" value="INNER MEMBRANE PROTEIN YEIH-RELATED"/>
    <property type="match status" value="1"/>
</dbReference>
<dbReference type="PANTHER" id="PTHR30106:SF2">
    <property type="entry name" value="UPF0324 INNER MEMBRANE PROTEIN YEIH"/>
    <property type="match status" value="1"/>
</dbReference>
<dbReference type="Pfam" id="PF03601">
    <property type="entry name" value="Cons_hypoth698"/>
    <property type="match status" value="1"/>
</dbReference>
<feature type="chain" id="PRO_0000157441" description="UPF0324 membrane protein RSc1111">
    <location>
        <begin position="1"/>
        <end position="366"/>
    </location>
</feature>
<feature type="transmembrane region" description="Helical" evidence="1">
    <location>
        <begin position="21"/>
        <end position="43"/>
    </location>
</feature>
<feature type="transmembrane region" description="Helical" evidence="1">
    <location>
        <begin position="103"/>
        <end position="125"/>
    </location>
</feature>
<feature type="transmembrane region" description="Helical" evidence="1">
    <location>
        <begin position="137"/>
        <end position="159"/>
    </location>
</feature>
<feature type="transmembrane region" description="Helical" evidence="1">
    <location>
        <begin position="169"/>
        <end position="191"/>
    </location>
</feature>
<feature type="transmembrane region" description="Helical" evidence="1">
    <location>
        <begin position="198"/>
        <end position="220"/>
    </location>
</feature>
<feature type="transmembrane region" description="Helical" evidence="1">
    <location>
        <begin position="240"/>
        <end position="262"/>
    </location>
</feature>
<feature type="transmembrane region" description="Helical" evidence="1">
    <location>
        <begin position="283"/>
        <end position="305"/>
    </location>
</feature>
<feature type="transmembrane region" description="Helical" evidence="1">
    <location>
        <begin position="343"/>
        <end position="365"/>
    </location>
</feature>
<sequence length="366" mass="36840">MTTAQKQWAAEGGLRWDGRMLAGAGLLAGCAGVAMIAGATAWAGHLGLSALTLAILLGMAIGHVPGHQRWLTAGTIQFARHTLLRAGVVLYGARLTLAQVHDLGASGVVIPLLVLAATMLSGAWVGTRVFGLSRSQAVLVAAGSAVCGAAAVLAVAPAVKASPRETAVAIASVVLFGTAGIFLYPWLYALAMHAGVAVAPAHFGVYIGSTLHEVAQVIAAARPLGDDAANAAVVSKMVRVLALAPLLVVLACTMPAEGLVLEAGSGEGALRRATGHAWRAMPWFAAGLLGVALLNSGGAIPATWHAPIDAIDTGMLACAMFAIGTQTHVPMLLKSGVRPLLCAGVLWVGLVAGGAAINAGVRWLAG</sequence>
<accession>Q8Y0D3</accession>
<organism>
    <name type="scientific">Ralstonia nicotianae (strain ATCC BAA-1114 / GMI1000)</name>
    <name type="common">Ralstonia solanacearum</name>
    <dbReference type="NCBI Taxonomy" id="267608"/>
    <lineage>
        <taxon>Bacteria</taxon>
        <taxon>Pseudomonadati</taxon>
        <taxon>Pseudomonadota</taxon>
        <taxon>Betaproteobacteria</taxon>
        <taxon>Burkholderiales</taxon>
        <taxon>Burkholderiaceae</taxon>
        <taxon>Ralstonia</taxon>
        <taxon>Ralstonia solanacearum species complex</taxon>
    </lineage>
</organism>
<proteinExistence type="inferred from homology"/>
<protein>
    <recommendedName>
        <fullName>UPF0324 membrane protein RSc1111</fullName>
    </recommendedName>
</protein>
<evidence type="ECO:0000255" key="1"/>
<evidence type="ECO:0000305" key="2"/>
<name>Y1111_RALN1</name>
<gene>
    <name type="ordered locus">RSc1111</name>
    <name type="ORF">RS04015</name>
</gene>
<reference key="1">
    <citation type="journal article" date="2002" name="Nature">
        <title>Genome sequence of the plant pathogen Ralstonia solanacearum.</title>
        <authorList>
            <person name="Salanoubat M."/>
            <person name="Genin S."/>
            <person name="Artiguenave F."/>
            <person name="Gouzy J."/>
            <person name="Mangenot S."/>
            <person name="Arlat M."/>
            <person name="Billault A."/>
            <person name="Brottier P."/>
            <person name="Camus J.-C."/>
            <person name="Cattolico L."/>
            <person name="Chandler M."/>
            <person name="Choisne N."/>
            <person name="Claudel-Renard C."/>
            <person name="Cunnac S."/>
            <person name="Demange N."/>
            <person name="Gaspin C."/>
            <person name="Lavie M."/>
            <person name="Moisan A."/>
            <person name="Robert C."/>
            <person name="Saurin W."/>
            <person name="Schiex T."/>
            <person name="Siguier P."/>
            <person name="Thebault P."/>
            <person name="Whalen M."/>
            <person name="Wincker P."/>
            <person name="Levy M."/>
            <person name="Weissenbach J."/>
            <person name="Boucher C.A."/>
        </authorList>
    </citation>
    <scope>NUCLEOTIDE SEQUENCE [LARGE SCALE GENOMIC DNA]</scope>
    <source>
        <strain>ATCC BAA-1114 / GMI1000</strain>
    </source>
</reference>
<keyword id="KW-1003">Cell membrane</keyword>
<keyword id="KW-0472">Membrane</keyword>
<keyword id="KW-1185">Reference proteome</keyword>
<keyword id="KW-0812">Transmembrane</keyword>
<keyword id="KW-1133">Transmembrane helix</keyword>